<evidence type="ECO:0000250" key="1"/>
<evidence type="ECO:0000255" key="2">
    <source>
        <dbReference type="HAMAP-Rule" id="MF_01057"/>
    </source>
</evidence>
<dbReference type="EC" id="2.1.1.33" evidence="2"/>
<dbReference type="EMBL" id="CP000720">
    <property type="protein sequence ID" value="ABS47809.1"/>
    <property type="molecule type" value="Genomic_DNA"/>
</dbReference>
<dbReference type="RefSeq" id="WP_012104659.1">
    <property type="nucleotide sequence ID" value="NC_009708.1"/>
</dbReference>
<dbReference type="SMR" id="A7FEX6"/>
<dbReference type="KEGG" id="ypi:YpsIP31758_0820"/>
<dbReference type="HOGENOM" id="CLU_050910_0_1_6"/>
<dbReference type="UniPathway" id="UPA00989"/>
<dbReference type="Proteomes" id="UP000002412">
    <property type="component" value="Chromosome"/>
</dbReference>
<dbReference type="GO" id="GO:0043527">
    <property type="term" value="C:tRNA methyltransferase complex"/>
    <property type="evidence" value="ECO:0007669"/>
    <property type="project" value="TreeGrafter"/>
</dbReference>
<dbReference type="GO" id="GO:0008176">
    <property type="term" value="F:tRNA (guanine(46)-N7)-methyltransferase activity"/>
    <property type="evidence" value="ECO:0007669"/>
    <property type="project" value="UniProtKB-UniRule"/>
</dbReference>
<dbReference type="FunFam" id="3.40.50.150:FF:000024">
    <property type="entry name" value="tRNA (guanine-N(7)-)-methyltransferase"/>
    <property type="match status" value="1"/>
</dbReference>
<dbReference type="Gene3D" id="3.40.50.150">
    <property type="entry name" value="Vaccinia Virus protein VP39"/>
    <property type="match status" value="1"/>
</dbReference>
<dbReference type="HAMAP" id="MF_01057">
    <property type="entry name" value="tRNA_methyltr_TrmB"/>
    <property type="match status" value="1"/>
</dbReference>
<dbReference type="InterPro" id="IPR029063">
    <property type="entry name" value="SAM-dependent_MTases_sf"/>
</dbReference>
<dbReference type="InterPro" id="IPR003358">
    <property type="entry name" value="tRNA_(Gua-N-7)_MeTrfase_Trmb"/>
</dbReference>
<dbReference type="InterPro" id="IPR055361">
    <property type="entry name" value="tRNA_methyltr_TrmB_bact"/>
</dbReference>
<dbReference type="NCBIfam" id="TIGR00091">
    <property type="entry name" value="tRNA (guanosine(46)-N7)-methyltransferase TrmB"/>
    <property type="match status" value="1"/>
</dbReference>
<dbReference type="PANTHER" id="PTHR23417">
    <property type="entry name" value="3-DEOXY-D-MANNO-OCTULOSONIC-ACID TRANSFERASE/TRNA GUANINE-N 7 - -METHYLTRANSFERASE"/>
    <property type="match status" value="1"/>
</dbReference>
<dbReference type="PANTHER" id="PTHR23417:SF14">
    <property type="entry name" value="PENTACOTRIPEPTIDE-REPEAT REGION OF PRORP DOMAIN-CONTAINING PROTEIN"/>
    <property type="match status" value="1"/>
</dbReference>
<dbReference type="Pfam" id="PF02390">
    <property type="entry name" value="Methyltransf_4"/>
    <property type="match status" value="1"/>
</dbReference>
<dbReference type="SUPFAM" id="SSF53335">
    <property type="entry name" value="S-adenosyl-L-methionine-dependent methyltransferases"/>
    <property type="match status" value="1"/>
</dbReference>
<dbReference type="PROSITE" id="PS51625">
    <property type="entry name" value="SAM_MT_TRMB"/>
    <property type="match status" value="1"/>
</dbReference>
<name>TRMB_YERP3</name>
<gene>
    <name evidence="2" type="primary">trmB</name>
    <name type="ordered locus">YpsIP31758_0820</name>
</gene>
<keyword id="KW-0489">Methyltransferase</keyword>
<keyword id="KW-0949">S-adenosyl-L-methionine</keyword>
<keyword id="KW-0808">Transferase</keyword>
<keyword id="KW-0819">tRNA processing</keyword>
<feature type="chain" id="PRO_1000064416" description="tRNA (guanine-N(7)-)-methyltransferase">
    <location>
        <begin position="1"/>
        <end position="239"/>
    </location>
</feature>
<feature type="region of interest" description="Interaction with RNA" evidence="2">
    <location>
        <begin position="150"/>
        <end position="155"/>
    </location>
</feature>
<feature type="active site" evidence="1">
    <location>
        <position position="144"/>
    </location>
</feature>
<feature type="binding site" evidence="2">
    <location>
        <position position="69"/>
    </location>
    <ligand>
        <name>S-adenosyl-L-methionine</name>
        <dbReference type="ChEBI" id="CHEBI:59789"/>
    </ligand>
</feature>
<feature type="binding site" evidence="2">
    <location>
        <position position="94"/>
    </location>
    <ligand>
        <name>S-adenosyl-L-methionine</name>
        <dbReference type="ChEBI" id="CHEBI:59789"/>
    </ligand>
</feature>
<feature type="binding site" evidence="2">
    <location>
        <position position="121"/>
    </location>
    <ligand>
        <name>S-adenosyl-L-methionine</name>
        <dbReference type="ChEBI" id="CHEBI:59789"/>
    </ligand>
</feature>
<feature type="binding site" evidence="2">
    <location>
        <position position="144"/>
    </location>
    <ligand>
        <name>S-adenosyl-L-methionine</name>
        <dbReference type="ChEBI" id="CHEBI:59789"/>
    </ligand>
</feature>
<feature type="binding site" evidence="2">
    <location>
        <position position="148"/>
    </location>
    <ligand>
        <name>substrate</name>
    </ligand>
</feature>
<feature type="binding site" evidence="2">
    <location>
        <position position="180"/>
    </location>
    <ligand>
        <name>substrate</name>
    </ligand>
</feature>
<feature type="binding site" evidence="2">
    <location>
        <begin position="217"/>
        <end position="220"/>
    </location>
    <ligand>
        <name>substrate</name>
    </ligand>
</feature>
<sequence length="239" mass="26989">MINDVISPEFDENGRALRRIRSFVRRQGRLTKGQQLALDSYWPVMGVEYQAAPVDLNTLFGREAPIVLEIGFGMGTSLVTMAANNPQQNFLGIEVHSPGVGACLSSAHDAGLSNLRIMCHDAVEVLENMIPEASLDMVQLFFPDPWHKARHNKRRIVQTPFVELVKSKLKVGGVFHMATDWQPYAEHMLEVMSGVSGYLNLSEQNDYVPRPDSRPLTKFELRGQRLGHGVWDLMFERKE</sequence>
<organism>
    <name type="scientific">Yersinia pseudotuberculosis serotype O:1b (strain IP 31758)</name>
    <dbReference type="NCBI Taxonomy" id="349747"/>
    <lineage>
        <taxon>Bacteria</taxon>
        <taxon>Pseudomonadati</taxon>
        <taxon>Pseudomonadota</taxon>
        <taxon>Gammaproteobacteria</taxon>
        <taxon>Enterobacterales</taxon>
        <taxon>Yersiniaceae</taxon>
        <taxon>Yersinia</taxon>
    </lineage>
</organism>
<comment type="function">
    <text evidence="2">Catalyzes the formation of N(7)-methylguanine at position 46 (m7G46) in tRNA.</text>
</comment>
<comment type="catalytic activity">
    <reaction evidence="2">
        <text>guanosine(46) in tRNA + S-adenosyl-L-methionine = N(7)-methylguanosine(46) in tRNA + S-adenosyl-L-homocysteine</text>
        <dbReference type="Rhea" id="RHEA:42708"/>
        <dbReference type="Rhea" id="RHEA-COMP:10188"/>
        <dbReference type="Rhea" id="RHEA-COMP:10189"/>
        <dbReference type="ChEBI" id="CHEBI:57856"/>
        <dbReference type="ChEBI" id="CHEBI:59789"/>
        <dbReference type="ChEBI" id="CHEBI:74269"/>
        <dbReference type="ChEBI" id="CHEBI:74480"/>
        <dbReference type="EC" id="2.1.1.33"/>
    </reaction>
</comment>
<comment type="pathway">
    <text evidence="2">tRNA modification; N(7)-methylguanine-tRNA biosynthesis.</text>
</comment>
<comment type="subunit">
    <text evidence="2">Monomer.</text>
</comment>
<comment type="similarity">
    <text evidence="2">Belongs to the class I-like SAM-binding methyltransferase superfamily. TrmB family.</text>
</comment>
<accession>A7FEX6</accession>
<protein>
    <recommendedName>
        <fullName evidence="2">tRNA (guanine-N(7)-)-methyltransferase</fullName>
        <ecNumber evidence="2">2.1.1.33</ecNumber>
    </recommendedName>
    <alternativeName>
        <fullName evidence="2">tRNA (guanine(46)-N(7))-methyltransferase</fullName>
    </alternativeName>
    <alternativeName>
        <fullName evidence="2">tRNA(m7G46)-methyltransferase</fullName>
    </alternativeName>
</protein>
<reference key="1">
    <citation type="journal article" date="2007" name="PLoS Genet.">
        <title>The complete genome sequence of Yersinia pseudotuberculosis IP31758, the causative agent of Far East scarlet-like fever.</title>
        <authorList>
            <person name="Eppinger M."/>
            <person name="Rosovitz M.J."/>
            <person name="Fricke W.F."/>
            <person name="Rasko D.A."/>
            <person name="Kokorina G."/>
            <person name="Fayolle C."/>
            <person name="Lindler L.E."/>
            <person name="Carniel E."/>
            <person name="Ravel J."/>
        </authorList>
    </citation>
    <scope>NUCLEOTIDE SEQUENCE [LARGE SCALE GENOMIC DNA]</scope>
    <source>
        <strain>IP 31758</strain>
    </source>
</reference>
<proteinExistence type="inferred from homology"/>